<sequence>MYFMNLLTTIIPILLAVAFLTLLERKVLGYMQLRKGPNIVGPYGLLQPIADAIKLFTKEPLQPLTSSHVLFIIAPTLALTLALMMWIPLPMPHPLTNMNLSILFMLALSSLAVYGIMWSGWASNSKYALIGALRAVAQTISYEVTLAIIILSILLMNGSFALSTLITTQEHIWLILPSWPLAMMWFISTLAETNRAPFDLTEGESELVSGFNVEYAGGPSALFFLAEYANIIMMNALTIILFLGAHNNPMFPELYTTNFMIKALVLTTLFLWVRASYPRFRYDQLMHLLWKNFLPLTLVMCMWHVTLPIILAGIPPQT</sequence>
<proteinExistence type="inferred from homology"/>
<evidence type="ECO:0000250" key="1">
    <source>
        <dbReference type="UniProtKB" id="P03886"/>
    </source>
</evidence>
<evidence type="ECO:0000250" key="2">
    <source>
        <dbReference type="UniProtKB" id="P03887"/>
    </source>
</evidence>
<evidence type="ECO:0000255" key="3"/>
<evidence type="ECO:0000305" key="4"/>
<gene>
    <name type="primary">MT-ND1</name>
    <name type="synonym">MTND1</name>
    <name type="synonym">NADH1</name>
    <name type="synonym">ND1</name>
</gene>
<dbReference type="EC" id="7.1.1.2" evidence="1"/>
<dbReference type="EMBL" id="AB079822">
    <property type="protein sequence ID" value="BAB92047.1"/>
    <property type="molecule type" value="Genomic_DNA"/>
</dbReference>
<dbReference type="SMR" id="Q8M880"/>
<dbReference type="GO" id="GO:0005743">
    <property type="term" value="C:mitochondrial inner membrane"/>
    <property type="evidence" value="ECO:0000250"/>
    <property type="project" value="UniProtKB"/>
</dbReference>
<dbReference type="GO" id="GO:0008137">
    <property type="term" value="F:NADH dehydrogenase (ubiquinone) activity"/>
    <property type="evidence" value="ECO:0000250"/>
    <property type="project" value="UniProtKB"/>
</dbReference>
<dbReference type="GO" id="GO:0006120">
    <property type="term" value="P:mitochondrial electron transport, NADH to ubiquinone"/>
    <property type="evidence" value="ECO:0000250"/>
    <property type="project" value="UniProtKB"/>
</dbReference>
<dbReference type="GO" id="GO:0032981">
    <property type="term" value="P:mitochondrial respiratory chain complex I assembly"/>
    <property type="evidence" value="ECO:0000250"/>
    <property type="project" value="UniProtKB"/>
</dbReference>
<dbReference type="HAMAP" id="MF_01350">
    <property type="entry name" value="NDH1_NuoH"/>
    <property type="match status" value="1"/>
</dbReference>
<dbReference type="InterPro" id="IPR001694">
    <property type="entry name" value="NADH_UbQ_OxRdtase_su1/FPO"/>
</dbReference>
<dbReference type="InterPro" id="IPR018086">
    <property type="entry name" value="NADH_UbQ_OxRdtase_su1_CS"/>
</dbReference>
<dbReference type="PANTHER" id="PTHR11432">
    <property type="entry name" value="NADH DEHYDROGENASE SUBUNIT 1"/>
    <property type="match status" value="1"/>
</dbReference>
<dbReference type="PANTHER" id="PTHR11432:SF3">
    <property type="entry name" value="NADH-UBIQUINONE OXIDOREDUCTASE CHAIN 1"/>
    <property type="match status" value="1"/>
</dbReference>
<dbReference type="Pfam" id="PF00146">
    <property type="entry name" value="NADHdh"/>
    <property type="match status" value="1"/>
</dbReference>
<dbReference type="PROSITE" id="PS00667">
    <property type="entry name" value="COMPLEX1_ND1_1"/>
    <property type="match status" value="1"/>
</dbReference>
<dbReference type="PROSITE" id="PS00668">
    <property type="entry name" value="COMPLEX1_ND1_2"/>
    <property type="match status" value="1"/>
</dbReference>
<name>NU1M_CNENI</name>
<keyword id="KW-0249">Electron transport</keyword>
<keyword id="KW-0472">Membrane</keyword>
<keyword id="KW-0496">Mitochondrion</keyword>
<keyword id="KW-0999">Mitochondrion inner membrane</keyword>
<keyword id="KW-0520">NAD</keyword>
<keyword id="KW-0679">Respiratory chain</keyword>
<keyword id="KW-1278">Translocase</keyword>
<keyword id="KW-0812">Transmembrane</keyword>
<keyword id="KW-1133">Transmembrane helix</keyword>
<keyword id="KW-0813">Transport</keyword>
<keyword id="KW-0830">Ubiquinone</keyword>
<comment type="function">
    <text evidence="1">Core subunit of the mitochondrial membrane respiratory chain NADH dehydrogenase (Complex I) which catalyzes electron transfer from NADH through the respiratory chain, using ubiquinone as an electron acceptor. Essential for the catalytic activity and assembly of complex I.</text>
</comment>
<comment type="catalytic activity">
    <reaction evidence="1">
        <text>a ubiquinone + NADH + 5 H(+)(in) = a ubiquinol + NAD(+) + 4 H(+)(out)</text>
        <dbReference type="Rhea" id="RHEA:29091"/>
        <dbReference type="Rhea" id="RHEA-COMP:9565"/>
        <dbReference type="Rhea" id="RHEA-COMP:9566"/>
        <dbReference type="ChEBI" id="CHEBI:15378"/>
        <dbReference type="ChEBI" id="CHEBI:16389"/>
        <dbReference type="ChEBI" id="CHEBI:17976"/>
        <dbReference type="ChEBI" id="CHEBI:57540"/>
        <dbReference type="ChEBI" id="CHEBI:57945"/>
        <dbReference type="EC" id="7.1.1.2"/>
    </reaction>
</comment>
<comment type="subunit">
    <text evidence="2">Core subunit of respiratory chain NADH dehydrogenase (Complex I) which is composed of 45 different subunits.</text>
</comment>
<comment type="subcellular location">
    <subcellularLocation>
        <location evidence="2">Mitochondrion inner membrane</location>
        <topology evidence="3">Multi-pass membrane protein</topology>
    </subcellularLocation>
</comment>
<comment type="similarity">
    <text evidence="4">Belongs to the complex I subunit 1 family.</text>
</comment>
<reference key="1">
    <citation type="journal article" date="2002" name="J. Mol. Evol.">
        <title>Intra- and interfamily relationships of Vespertilionidae inferred by various molecular markers including SINE insertion data.</title>
        <authorList>
            <person name="Kawai K."/>
            <person name="Nikaido M."/>
            <person name="Harada M."/>
            <person name="Matsumura S."/>
            <person name="Lin L.K."/>
            <person name="Wu Y."/>
            <person name="Hasegawa M."/>
            <person name="Okada N."/>
        </authorList>
    </citation>
    <scope>NUCLEOTIDE SEQUENCE [GENOMIC DNA]</scope>
</reference>
<organism>
    <name type="scientific">Cnephaeus nilssonii</name>
    <name type="common">Northern bat</name>
    <name type="synonym">Eptesicus nilssonii</name>
    <dbReference type="NCBI Taxonomy" id="3371016"/>
    <lineage>
        <taxon>Eukaryota</taxon>
        <taxon>Metazoa</taxon>
        <taxon>Chordata</taxon>
        <taxon>Craniata</taxon>
        <taxon>Vertebrata</taxon>
        <taxon>Euteleostomi</taxon>
        <taxon>Mammalia</taxon>
        <taxon>Eutheria</taxon>
        <taxon>Laurasiatheria</taxon>
        <taxon>Chiroptera</taxon>
        <taxon>Yangochiroptera</taxon>
        <taxon>Vespertilionidae</taxon>
        <taxon>Cnephaeus</taxon>
    </lineage>
</organism>
<geneLocation type="mitochondrion"/>
<feature type="chain" id="PRO_0000117403" description="NADH-ubiquinone oxidoreductase chain 1">
    <location>
        <begin position="1"/>
        <end position="318"/>
    </location>
</feature>
<feature type="transmembrane region" description="Helical" evidence="3">
    <location>
        <begin position="3"/>
        <end position="23"/>
    </location>
</feature>
<feature type="transmembrane region" description="Helical" evidence="3">
    <location>
        <begin position="69"/>
        <end position="89"/>
    </location>
</feature>
<feature type="transmembrane region" description="Helical" evidence="3">
    <location>
        <begin position="102"/>
        <end position="122"/>
    </location>
</feature>
<feature type="transmembrane region" description="Helical" evidence="3">
    <location>
        <begin position="146"/>
        <end position="166"/>
    </location>
</feature>
<feature type="transmembrane region" description="Helical" evidence="3">
    <location>
        <begin position="171"/>
        <end position="191"/>
    </location>
</feature>
<feature type="transmembrane region" description="Helical" evidence="3">
    <location>
        <begin position="222"/>
        <end position="242"/>
    </location>
</feature>
<feature type="transmembrane region" description="Helical" evidence="3">
    <location>
        <begin position="253"/>
        <end position="273"/>
    </location>
</feature>
<feature type="transmembrane region" description="Helical" evidence="3">
    <location>
        <begin position="294"/>
        <end position="314"/>
    </location>
</feature>
<protein>
    <recommendedName>
        <fullName>NADH-ubiquinone oxidoreductase chain 1</fullName>
        <ecNumber evidence="1">7.1.1.2</ecNumber>
    </recommendedName>
    <alternativeName>
        <fullName>NADH dehydrogenase subunit 1</fullName>
    </alternativeName>
</protein>
<accession>Q8M880</accession>